<feature type="chain" id="PRO_0000109028" description="UDP-N-acetylmuramoylalanine--D-glutamate ligase">
    <location>
        <begin position="1"/>
        <end position="459"/>
    </location>
</feature>
<feature type="binding site" evidence="1">
    <location>
        <begin position="120"/>
        <end position="126"/>
    </location>
    <ligand>
        <name>ATP</name>
        <dbReference type="ChEBI" id="CHEBI:30616"/>
    </ligand>
</feature>
<organism>
    <name type="scientific">Lactobacillus acidophilus (strain ATCC 700396 / NCK56 / N2 / NCFM)</name>
    <dbReference type="NCBI Taxonomy" id="272621"/>
    <lineage>
        <taxon>Bacteria</taxon>
        <taxon>Bacillati</taxon>
        <taxon>Bacillota</taxon>
        <taxon>Bacilli</taxon>
        <taxon>Lactobacillales</taxon>
        <taxon>Lactobacillaceae</taxon>
        <taxon>Lactobacillus</taxon>
    </lineage>
</organism>
<gene>
    <name evidence="1" type="primary">murD</name>
    <name type="ordered locus">LBA0808</name>
</gene>
<evidence type="ECO:0000255" key="1">
    <source>
        <dbReference type="HAMAP-Rule" id="MF_00639"/>
    </source>
</evidence>
<name>MURD_LACAC</name>
<proteinExistence type="inferred from homology"/>
<accession>Q5FKV3</accession>
<keyword id="KW-0067">ATP-binding</keyword>
<keyword id="KW-0131">Cell cycle</keyword>
<keyword id="KW-0132">Cell division</keyword>
<keyword id="KW-0133">Cell shape</keyword>
<keyword id="KW-0961">Cell wall biogenesis/degradation</keyword>
<keyword id="KW-0963">Cytoplasm</keyword>
<keyword id="KW-0436">Ligase</keyword>
<keyword id="KW-0547">Nucleotide-binding</keyword>
<keyword id="KW-0573">Peptidoglycan synthesis</keyword>
<keyword id="KW-1185">Reference proteome</keyword>
<reference key="1">
    <citation type="journal article" date="2005" name="Proc. Natl. Acad. Sci. U.S.A.">
        <title>Complete genome sequence of the probiotic lactic acid bacterium Lactobacillus acidophilus NCFM.</title>
        <authorList>
            <person name="Altermann E."/>
            <person name="Russell W.M."/>
            <person name="Azcarate-Peril M.A."/>
            <person name="Barrangou R."/>
            <person name="Buck B.L."/>
            <person name="McAuliffe O."/>
            <person name="Souther N."/>
            <person name="Dobson A."/>
            <person name="Duong T."/>
            <person name="Callanan M."/>
            <person name="Lick S."/>
            <person name="Hamrick A."/>
            <person name="Cano R."/>
            <person name="Klaenhammer T.R."/>
        </authorList>
    </citation>
    <scope>NUCLEOTIDE SEQUENCE [LARGE SCALE GENOMIC DNA]</scope>
    <source>
        <strain>ATCC 700396 / NCK56 / N2 / NCFM</strain>
    </source>
</reference>
<sequence length="459" mass="51040">MKDIKTYDNKNILVLGLGKSGFAVSELLLKLGANLTLNDKADLDKNEKAQELKAKGVRVIGGYHPVDLLEEEHFDYLVKNPGIPYENPMVKKAEELDIPIITEPEVALSCSDAPYVCITGSNGKTTTVMLTQRILDHHLQKTGHHAYAVGNIGVPISEVVPKATKDDILVVEISSFQLLGVTDIKPKVAAIVDIYNNVHLDYHKTFENYVDAKLNVTRTQNSDDYFIANFDQKDILAKEKEVSPAKMQTFSETDHNADYFIGDEYLESQDEKIMKIADIKLPGVHNLQNSLVAIAIAKLMGADNEDIAAVLSTFTGAKHRLQYVTTLDGRKIYNDSKSTNIEAATVAIPAFKEPEVLIAGGLDRGFTFDDLVPLFKKHVKSIVLYGETKYLLADAARKAGIKEIVIVNTLQEAVPRAYELTEPGDVILFSPACASWDQFRTFEERGDYFVRFVEELKTK</sequence>
<protein>
    <recommendedName>
        <fullName evidence="1">UDP-N-acetylmuramoylalanine--D-glutamate ligase</fullName>
        <ecNumber evidence="1">6.3.2.9</ecNumber>
    </recommendedName>
    <alternativeName>
        <fullName evidence="1">D-glutamic acid-adding enzyme</fullName>
    </alternativeName>
    <alternativeName>
        <fullName evidence="1">UDP-N-acetylmuramoyl-L-alanyl-D-glutamate synthetase</fullName>
    </alternativeName>
</protein>
<dbReference type="EC" id="6.3.2.9" evidence="1"/>
<dbReference type="EMBL" id="CP000033">
    <property type="protein sequence ID" value="AAV42671.1"/>
    <property type="molecule type" value="Genomic_DNA"/>
</dbReference>
<dbReference type="RefSeq" id="WP_003546797.1">
    <property type="nucleotide sequence ID" value="NC_006814.3"/>
</dbReference>
<dbReference type="RefSeq" id="YP_193702.1">
    <property type="nucleotide sequence ID" value="NC_006814.3"/>
</dbReference>
<dbReference type="SMR" id="Q5FKV3"/>
<dbReference type="STRING" id="272621.LBA0808"/>
<dbReference type="GeneID" id="93290069"/>
<dbReference type="KEGG" id="lac:LBA0808"/>
<dbReference type="PATRIC" id="fig|272621.13.peg.770"/>
<dbReference type="eggNOG" id="COG0771">
    <property type="taxonomic scope" value="Bacteria"/>
</dbReference>
<dbReference type="HOGENOM" id="CLU_032540_0_1_9"/>
<dbReference type="OrthoDB" id="9809796at2"/>
<dbReference type="BioCyc" id="LACI272621:G1G49-821-MONOMER"/>
<dbReference type="UniPathway" id="UPA00219"/>
<dbReference type="Proteomes" id="UP000006381">
    <property type="component" value="Chromosome"/>
</dbReference>
<dbReference type="GO" id="GO:0005737">
    <property type="term" value="C:cytoplasm"/>
    <property type="evidence" value="ECO:0007669"/>
    <property type="project" value="UniProtKB-SubCell"/>
</dbReference>
<dbReference type="GO" id="GO:0005524">
    <property type="term" value="F:ATP binding"/>
    <property type="evidence" value="ECO:0007669"/>
    <property type="project" value="UniProtKB-UniRule"/>
</dbReference>
<dbReference type="GO" id="GO:0008764">
    <property type="term" value="F:UDP-N-acetylmuramoylalanine-D-glutamate ligase activity"/>
    <property type="evidence" value="ECO:0007669"/>
    <property type="project" value="UniProtKB-UniRule"/>
</dbReference>
<dbReference type="GO" id="GO:0051301">
    <property type="term" value="P:cell division"/>
    <property type="evidence" value="ECO:0007669"/>
    <property type="project" value="UniProtKB-KW"/>
</dbReference>
<dbReference type="GO" id="GO:0071555">
    <property type="term" value="P:cell wall organization"/>
    <property type="evidence" value="ECO:0007669"/>
    <property type="project" value="UniProtKB-KW"/>
</dbReference>
<dbReference type="GO" id="GO:0009252">
    <property type="term" value="P:peptidoglycan biosynthetic process"/>
    <property type="evidence" value="ECO:0007669"/>
    <property type="project" value="UniProtKB-UniRule"/>
</dbReference>
<dbReference type="GO" id="GO:0008360">
    <property type="term" value="P:regulation of cell shape"/>
    <property type="evidence" value="ECO:0007669"/>
    <property type="project" value="UniProtKB-KW"/>
</dbReference>
<dbReference type="Gene3D" id="3.90.190.20">
    <property type="entry name" value="Mur ligase, C-terminal domain"/>
    <property type="match status" value="1"/>
</dbReference>
<dbReference type="Gene3D" id="3.40.1190.10">
    <property type="entry name" value="Mur-like, catalytic domain"/>
    <property type="match status" value="1"/>
</dbReference>
<dbReference type="Gene3D" id="3.40.50.720">
    <property type="entry name" value="NAD(P)-binding Rossmann-like Domain"/>
    <property type="match status" value="1"/>
</dbReference>
<dbReference type="HAMAP" id="MF_00639">
    <property type="entry name" value="MurD"/>
    <property type="match status" value="1"/>
</dbReference>
<dbReference type="InterPro" id="IPR036565">
    <property type="entry name" value="Mur-like_cat_sf"/>
</dbReference>
<dbReference type="InterPro" id="IPR004101">
    <property type="entry name" value="Mur_ligase_C"/>
</dbReference>
<dbReference type="InterPro" id="IPR036615">
    <property type="entry name" value="Mur_ligase_C_dom_sf"/>
</dbReference>
<dbReference type="InterPro" id="IPR013221">
    <property type="entry name" value="Mur_ligase_cen"/>
</dbReference>
<dbReference type="InterPro" id="IPR005762">
    <property type="entry name" value="MurD"/>
</dbReference>
<dbReference type="NCBIfam" id="TIGR01087">
    <property type="entry name" value="murD"/>
    <property type="match status" value="1"/>
</dbReference>
<dbReference type="PANTHER" id="PTHR43692">
    <property type="entry name" value="UDP-N-ACETYLMURAMOYLALANINE--D-GLUTAMATE LIGASE"/>
    <property type="match status" value="1"/>
</dbReference>
<dbReference type="PANTHER" id="PTHR43692:SF1">
    <property type="entry name" value="UDP-N-ACETYLMURAMOYLALANINE--D-GLUTAMATE LIGASE"/>
    <property type="match status" value="1"/>
</dbReference>
<dbReference type="Pfam" id="PF02875">
    <property type="entry name" value="Mur_ligase_C"/>
    <property type="match status" value="1"/>
</dbReference>
<dbReference type="Pfam" id="PF08245">
    <property type="entry name" value="Mur_ligase_M"/>
    <property type="match status" value="1"/>
</dbReference>
<dbReference type="Pfam" id="PF21799">
    <property type="entry name" value="MurD-like_N"/>
    <property type="match status" value="1"/>
</dbReference>
<dbReference type="SUPFAM" id="SSF51984">
    <property type="entry name" value="MurCD N-terminal domain"/>
    <property type="match status" value="1"/>
</dbReference>
<dbReference type="SUPFAM" id="SSF53623">
    <property type="entry name" value="MurD-like peptide ligases, catalytic domain"/>
    <property type="match status" value="1"/>
</dbReference>
<dbReference type="SUPFAM" id="SSF53244">
    <property type="entry name" value="MurD-like peptide ligases, peptide-binding domain"/>
    <property type="match status" value="1"/>
</dbReference>
<comment type="function">
    <text evidence="1">Cell wall formation. Catalyzes the addition of glutamate to the nucleotide precursor UDP-N-acetylmuramoyl-L-alanine (UMA).</text>
</comment>
<comment type="catalytic activity">
    <reaction evidence="1">
        <text>UDP-N-acetyl-alpha-D-muramoyl-L-alanine + D-glutamate + ATP = UDP-N-acetyl-alpha-D-muramoyl-L-alanyl-D-glutamate + ADP + phosphate + H(+)</text>
        <dbReference type="Rhea" id="RHEA:16429"/>
        <dbReference type="ChEBI" id="CHEBI:15378"/>
        <dbReference type="ChEBI" id="CHEBI:29986"/>
        <dbReference type="ChEBI" id="CHEBI:30616"/>
        <dbReference type="ChEBI" id="CHEBI:43474"/>
        <dbReference type="ChEBI" id="CHEBI:83898"/>
        <dbReference type="ChEBI" id="CHEBI:83900"/>
        <dbReference type="ChEBI" id="CHEBI:456216"/>
        <dbReference type="EC" id="6.3.2.9"/>
    </reaction>
</comment>
<comment type="pathway">
    <text evidence="1">Cell wall biogenesis; peptidoglycan biosynthesis.</text>
</comment>
<comment type="subcellular location">
    <subcellularLocation>
        <location evidence="1">Cytoplasm</location>
    </subcellularLocation>
</comment>
<comment type="similarity">
    <text evidence="1">Belongs to the MurCDEF family.</text>
</comment>